<sequence length="399" mass="44465">MTPSAASALVEKTPLETYVPPAKPSLIGLSRAQLCDRLGDVGVAPPQRKMRAQQLWHWMYVRGARDFSEMTNVSKEMRAMLAEHFTVDRPEVVAEQISADGTRKWLLRLPSGGDGQKAHEVECVYIPETDRGTLCVSSQVGCTLNCAFCHTGTQRLVRNLTAGEIVGQVMVARDRLGDWIDRETPNGNRLITNIVMMGMGEPLYNFDAVRDALLIVSDNEGIGISRRRITLSTSGVVPNIKRTGDEIGVMLAISLHAVRDELRDELVPLNRKYPLKELLQACRDYPGASNARRITFEYVMLKGVNDSLDDARKLVQLLKGIPAKINLIPFNPWPGSNYECSDWDQIEKFSEYVFNAGYSSPVRTPRGRDILAACGQLKSETEKLSVRERNALRAMAMTD</sequence>
<reference key="1">
    <citation type="journal article" date="2004" name="Nat. Biotechnol.">
        <title>Complete genome sequence of the metabolically versatile photosynthetic bacterium Rhodopseudomonas palustris.</title>
        <authorList>
            <person name="Larimer F.W."/>
            <person name="Chain P."/>
            <person name="Hauser L."/>
            <person name="Lamerdin J.E."/>
            <person name="Malfatti S."/>
            <person name="Do L."/>
            <person name="Land M.L."/>
            <person name="Pelletier D.A."/>
            <person name="Beatty J.T."/>
            <person name="Lang A.S."/>
            <person name="Tabita F.R."/>
            <person name="Gibson J.L."/>
            <person name="Hanson T.E."/>
            <person name="Bobst C."/>
            <person name="Torres y Torres J.L."/>
            <person name="Peres C."/>
            <person name="Harrison F.H."/>
            <person name="Gibson J."/>
            <person name="Harwood C.S."/>
        </authorList>
    </citation>
    <scope>NUCLEOTIDE SEQUENCE [LARGE SCALE GENOMIC DNA]</scope>
    <source>
        <strain>ATCC BAA-98 / CGA009</strain>
    </source>
</reference>
<evidence type="ECO:0000255" key="1">
    <source>
        <dbReference type="HAMAP-Rule" id="MF_01849"/>
    </source>
</evidence>
<evidence type="ECO:0000255" key="2">
    <source>
        <dbReference type="PROSITE-ProRule" id="PRU01266"/>
    </source>
</evidence>
<evidence type="ECO:0000305" key="3"/>
<name>RLMN_RHOPA</name>
<gene>
    <name evidence="1" type="primary">rlmN</name>
    <name type="ordered locus">RPA0396</name>
</gene>
<organism>
    <name type="scientific">Rhodopseudomonas palustris (strain ATCC BAA-98 / CGA009)</name>
    <dbReference type="NCBI Taxonomy" id="258594"/>
    <lineage>
        <taxon>Bacteria</taxon>
        <taxon>Pseudomonadati</taxon>
        <taxon>Pseudomonadota</taxon>
        <taxon>Alphaproteobacteria</taxon>
        <taxon>Hyphomicrobiales</taxon>
        <taxon>Nitrobacteraceae</taxon>
        <taxon>Rhodopseudomonas</taxon>
    </lineage>
</organism>
<proteinExistence type="inferred from homology"/>
<dbReference type="EC" id="2.1.1.192" evidence="1"/>
<dbReference type="EMBL" id="BX572594">
    <property type="protein sequence ID" value="CAE25840.1"/>
    <property type="status" value="ALT_INIT"/>
    <property type="molecule type" value="Genomic_DNA"/>
</dbReference>
<dbReference type="RefSeq" id="WP_042440709.1">
    <property type="nucleotide sequence ID" value="NZ_CP116810.1"/>
</dbReference>
<dbReference type="SMR" id="Q6NCS3"/>
<dbReference type="STRING" id="258594.RPA0396"/>
<dbReference type="GeneID" id="66891410"/>
<dbReference type="eggNOG" id="COG0820">
    <property type="taxonomic scope" value="Bacteria"/>
</dbReference>
<dbReference type="HOGENOM" id="CLU_029101_0_0_5"/>
<dbReference type="GO" id="GO:0005737">
    <property type="term" value="C:cytoplasm"/>
    <property type="evidence" value="ECO:0007669"/>
    <property type="project" value="UniProtKB-SubCell"/>
</dbReference>
<dbReference type="GO" id="GO:0051539">
    <property type="term" value="F:4 iron, 4 sulfur cluster binding"/>
    <property type="evidence" value="ECO:0007669"/>
    <property type="project" value="UniProtKB-UniRule"/>
</dbReference>
<dbReference type="GO" id="GO:0046872">
    <property type="term" value="F:metal ion binding"/>
    <property type="evidence" value="ECO:0007669"/>
    <property type="project" value="UniProtKB-KW"/>
</dbReference>
<dbReference type="GO" id="GO:0070040">
    <property type="term" value="F:rRNA (adenine(2503)-C2-)-methyltransferase activity"/>
    <property type="evidence" value="ECO:0007669"/>
    <property type="project" value="UniProtKB-UniRule"/>
</dbReference>
<dbReference type="GO" id="GO:0019843">
    <property type="term" value="F:rRNA binding"/>
    <property type="evidence" value="ECO:0007669"/>
    <property type="project" value="UniProtKB-UniRule"/>
</dbReference>
<dbReference type="GO" id="GO:0002935">
    <property type="term" value="F:tRNA (adenine(37)-C2)-methyltransferase activity"/>
    <property type="evidence" value="ECO:0007669"/>
    <property type="project" value="UniProtKB-UniRule"/>
</dbReference>
<dbReference type="GO" id="GO:0000049">
    <property type="term" value="F:tRNA binding"/>
    <property type="evidence" value="ECO:0007669"/>
    <property type="project" value="UniProtKB-UniRule"/>
</dbReference>
<dbReference type="GO" id="GO:0070475">
    <property type="term" value="P:rRNA base methylation"/>
    <property type="evidence" value="ECO:0007669"/>
    <property type="project" value="UniProtKB-UniRule"/>
</dbReference>
<dbReference type="GO" id="GO:0030488">
    <property type="term" value="P:tRNA methylation"/>
    <property type="evidence" value="ECO:0007669"/>
    <property type="project" value="UniProtKB-UniRule"/>
</dbReference>
<dbReference type="CDD" id="cd01335">
    <property type="entry name" value="Radical_SAM"/>
    <property type="match status" value="1"/>
</dbReference>
<dbReference type="FunFam" id="3.20.20.70:FF:000008">
    <property type="entry name" value="Dual-specificity RNA methyltransferase RlmN"/>
    <property type="match status" value="1"/>
</dbReference>
<dbReference type="Gene3D" id="1.10.150.530">
    <property type="match status" value="1"/>
</dbReference>
<dbReference type="Gene3D" id="3.20.20.70">
    <property type="entry name" value="Aldolase class I"/>
    <property type="match status" value="1"/>
</dbReference>
<dbReference type="HAMAP" id="MF_01849">
    <property type="entry name" value="RNA_methyltr_RlmN"/>
    <property type="match status" value="1"/>
</dbReference>
<dbReference type="InterPro" id="IPR013785">
    <property type="entry name" value="Aldolase_TIM"/>
</dbReference>
<dbReference type="InterPro" id="IPR006638">
    <property type="entry name" value="Elp3/MiaA/NifB-like_rSAM"/>
</dbReference>
<dbReference type="InterPro" id="IPR040072">
    <property type="entry name" value="Methyltransferase_A"/>
</dbReference>
<dbReference type="InterPro" id="IPR048641">
    <property type="entry name" value="RlmN_N"/>
</dbReference>
<dbReference type="InterPro" id="IPR027492">
    <property type="entry name" value="RNA_MTrfase_RlmN"/>
</dbReference>
<dbReference type="InterPro" id="IPR004383">
    <property type="entry name" value="rRNA_lsu_MTrfase_RlmN/Cfr"/>
</dbReference>
<dbReference type="InterPro" id="IPR007197">
    <property type="entry name" value="rSAM"/>
</dbReference>
<dbReference type="NCBIfam" id="TIGR00048">
    <property type="entry name" value="rRNA_mod_RlmN"/>
    <property type="match status" value="1"/>
</dbReference>
<dbReference type="PANTHER" id="PTHR30544">
    <property type="entry name" value="23S RRNA METHYLTRANSFERASE"/>
    <property type="match status" value="1"/>
</dbReference>
<dbReference type="PANTHER" id="PTHR30544:SF5">
    <property type="entry name" value="RADICAL SAM CORE DOMAIN-CONTAINING PROTEIN"/>
    <property type="match status" value="1"/>
</dbReference>
<dbReference type="Pfam" id="PF04055">
    <property type="entry name" value="Radical_SAM"/>
    <property type="match status" value="1"/>
</dbReference>
<dbReference type="Pfam" id="PF21016">
    <property type="entry name" value="RlmN_N"/>
    <property type="match status" value="1"/>
</dbReference>
<dbReference type="PIRSF" id="PIRSF006004">
    <property type="entry name" value="CHP00048"/>
    <property type="match status" value="1"/>
</dbReference>
<dbReference type="SFLD" id="SFLDF00275">
    <property type="entry name" value="adenosine_C2_methyltransferase"/>
    <property type="match status" value="1"/>
</dbReference>
<dbReference type="SFLD" id="SFLDS00029">
    <property type="entry name" value="Radical_SAM"/>
    <property type="match status" value="1"/>
</dbReference>
<dbReference type="SMART" id="SM00729">
    <property type="entry name" value="Elp3"/>
    <property type="match status" value="1"/>
</dbReference>
<dbReference type="SUPFAM" id="SSF102114">
    <property type="entry name" value="Radical SAM enzymes"/>
    <property type="match status" value="1"/>
</dbReference>
<dbReference type="PROSITE" id="PS51918">
    <property type="entry name" value="RADICAL_SAM"/>
    <property type="match status" value="1"/>
</dbReference>
<feature type="chain" id="PRO_0000350368" description="Dual-specificity RNA methyltransferase RlmN">
    <location>
        <begin position="1"/>
        <end position="399"/>
    </location>
</feature>
<feature type="domain" description="Radical SAM core" evidence="2">
    <location>
        <begin position="128"/>
        <end position="371"/>
    </location>
</feature>
<feature type="active site" description="Proton acceptor" evidence="1">
    <location>
        <position position="122"/>
    </location>
</feature>
<feature type="active site" description="S-methylcysteine intermediate" evidence="1">
    <location>
        <position position="374"/>
    </location>
</feature>
<feature type="binding site" evidence="1">
    <location>
        <position position="142"/>
    </location>
    <ligand>
        <name>[4Fe-4S] cluster</name>
        <dbReference type="ChEBI" id="CHEBI:49883"/>
        <note>4Fe-4S-S-AdoMet</note>
    </ligand>
</feature>
<feature type="binding site" evidence="1">
    <location>
        <position position="146"/>
    </location>
    <ligand>
        <name>[4Fe-4S] cluster</name>
        <dbReference type="ChEBI" id="CHEBI:49883"/>
        <note>4Fe-4S-S-AdoMet</note>
    </ligand>
</feature>
<feature type="binding site" evidence="1">
    <location>
        <position position="149"/>
    </location>
    <ligand>
        <name>[4Fe-4S] cluster</name>
        <dbReference type="ChEBI" id="CHEBI:49883"/>
        <note>4Fe-4S-S-AdoMet</note>
    </ligand>
</feature>
<feature type="binding site" evidence="1">
    <location>
        <begin position="200"/>
        <end position="201"/>
    </location>
    <ligand>
        <name>S-adenosyl-L-methionine</name>
        <dbReference type="ChEBI" id="CHEBI:59789"/>
    </ligand>
</feature>
<feature type="binding site" evidence="1">
    <location>
        <position position="232"/>
    </location>
    <ligand>
        <name>S-adenosyl-L-methionine</name>
        <dbReference type="ChEBI" id="CHEBI:59789"/>
    </ligand>
</feature>
<feature type="binding site" evidence="1">
    <location>
        <begin position="254"/>
        <end position="256"/>
    </location>
    <ligand>
        <name>S-adenosyl-L-methionine</name>
        <dbReference type="ChEBI" id="CHEBI:59789"/>
    </ligand>
</feature>
<feature type="binding site" evidence="1">
    <location>
        <position position="331"/>
    </location>
    <ligand>
        <name>S-adenosyl-L-methionine</name>
        <dbReference type="ChEBI" id="CHEBI:59789"/>
    </ligand>
</feature>
<feature type="disulfide bond" description="(transient)" evidence="1">
    <location>
        <begin position="135"/>
        <end position="374"/>
    </location>
</feature>
<keyword id="KW-0004">4Fe-4S</keyword>
<keyword id="KW-0963">Cytoplasm</keyword>
<keyword id="KW-1015">Disulfide bond</keyword>
<keyword id="KW-0408">Iron</keyword>
<keyword id="KW-0411">Iron-sulfur</keyword>
<keyword id="KW-0479">Metal-binding</keyword>
<keyword id="KW-0489">Methyltransferase</keyword>
<keyword id="KW-0698">rRNA processing</keyword>
<keyword id="KW-0949">S-adenosyl-L-methionine</keyword>
<keyword id="KW-0808">Transferase</keyword>
<keyword id="KW-0819">tRNA processing</keyword>
<accession>Q6NCS3</accession>
<protein>
    <recommendedName>
        <fullName evidence="1">Dual-specificity RNA methyltransferase RlmN</fullName>
        <ecNumber evidence="1">2.1.1.192</ecNumber>
    </recommendedName>
    <alternativeName>
        <fullName evidence="1">23S rRNA (adenine(2503)-C(2))-methyltransferase</fullName>
    </alternativeName>
    <alternativeName>
        <fullName evidence="1">23S rRNA m2A2503 methyltransferase</fullName>
    </alternativeName>
    <alternativeName>
        <fullName evidence="1">Ribosomal RNA large subunit methyltransferase N</fullName>
    </alternativeName>
    <alternativeName>
        <fullName evidence="1">tRNA (adenine(37)-C(2))-methyltransferase</fullName>
    </alternativeName>
    <alternativeName>
        <fullName evidence="1">tRNA m2A37 methyltransferase</fullName>
    </alternativeName>
</protein>
<comment type="function">
    <text evidence="1">Specifically methylates position 2 of adenine 2503 in 23S rRNA and position 2 of adenine 37 in tRNAs. m2A2503 modification seems to play a crucial role in the proofreading step occurring at the peptidyl transferase center and thus would serve to optimize ribosomal fidelity.</text>
</comment>
<comment type="catalytic activity">
    <reaction evidence="1">
        <text>adenosine(2503) in 23S rRNA + 2 reduced [2Fe-2S]-[ferredoxin] + 2 S-adenosyl-L-methionine = 2-methyladenosine(2503) in 23S rRNA + 5'-deoxyadenosine + L-methionine + 2 oxidized [2Fe-2S]-[ferredoxin] + S-adenosyl-L-homocysteine</text>
        <dbReference type="Rhea" id="RHEA:42916"/>
        <dbReference type="Rhea" id="RHEA-COMP:10000"/>
        <dbReference type="Rhea" id="RHEA-COMP:10001"/>
        <dbReference type="Rhea" id="RHEA-COMP:10152"/>
        <dbReference type="Rhea" id="RHEA-COMP:10282"/>
        <dbReference type="ChEBI" id="CHEBI:17319"/>
        <dbReference type="ChEBI" id="CHEBI:33737"/>
        <dbReference type="ChEBI" id="CHEBI:33738"/>
        <dbReference type="ChEBI" id="CHEBI:57844"/>
        <dbReference type="ChEBI" id="CHEBI:57856"/>
        <dbReference type="ChEBI" id="CHEBI:59789"/>
        <dbReference type="ChEBI" id="CHEBI:74411"/>
        <dbReference type="ChEBI" id="CHEBI:74497"/>
        <dbReference type="EC" id="2.1.1.192"/>
    </reaction>
</comment>
<comment type="catalytic activity">
    <reaction evidence="1">
        <text>adenosine(37) in tRNA + 2 reduced [2Fe-2S]-[ferredoxin] + 2 S-adenosyl-L-methionine = 2-methyladenosine(37) in tRNA + 5'-deoxyadenosine + L-methionine + 2 oxidized [2Fe-2S]-[ferredoxin] + S-adenosyl-L-homocysteine</text>
        <dbReference type="Rhea" id="RHEA:43332"/>
        <dbReference type="Rhea" id="RHEA-COMP:10000"/>
        <dbReference type="Rhea" id="RHEA-COMP:10001"/>
        <dbReference type="Rhea" id="RHEA-COMP:10162"/>
        <dbReference type="Rhea" id="RHEA-COMP:10485"/>
        <dbReference type="ChEBI" id="CHEBI:17319"/>
        <dbReference type="ChEBI" id="CHEBI:33737"/>
        <dbReference type="ChEBI" id="CHEBI:33738"/>
        <dbReference type="ChEBI" id="CHEBI:57844"/>
        <dbReference type="ChEBI" id="CHEBI:57856"/>
        <dbReference type="ChEBI" id="CHEBI:59789"/>
        <dbReference type="ChEBI" id="CHEBI:74411"/>
        <dbReference type="ChEBI" id="CHEBI:74497"/>
        <dbReference type="EC" id="2.1.1.192"/>
    </reaction>
</comment>
<comment type="cofactor">
    <cofactor evidence="1">
        <name>[4Fe-4S] cluster</name>
        <dbReference type="ChEBI" id="CHEBI:49883"/>
    </cofactor>
    <text evidence="1">Binds 1 [4Fe-4S] cluster. The cluster is coordinated with 3 cysteines and an exchangeable S-adenosyl-L-methionine.</text>
</comment>
<comment type="subcellular location">
    <subcellularLocation>
        <location evidence="1">Cytoplasm</location>
    </subcellularLocation>
</comment>
<comment type="miscellaneous">
    <text evidence="1">Reaction proceeds by a ping-pong mechanism involving intermediate methylation of a conserved cysteine residue.</text>
</comment>
<comment type="similarity">
    <text evidence="1">Belongs to the radical SAM superfamily. RlmN family.</text>
</comment>
<comment type="sequence caution" evidence="3">
    <conflict type="erroneous initiation">
        <sequence resource="EMBL-CDS" id="CAE25840"/>
    </conflict>
</comment>